<dbReference type="EC" id="3.4.21.-"/>
<dbReference type="GO" id="GO:0005737">
    <property type="term" value="C:cytoplasm"/>
    <property type="evidence" value="ECO:0007669"/>
    <property type="project" value="UniProtKB-SubCell"/>
</dbReference>
<dbReference type="GO" id="GO:0008236">
    <property type="term" value="F:serine-type peptidase activity"/>
    <property type="evidence" value="ECO:0007669"/>
    <property type="project" value="UniProtKB-KW"/>
</dbReference>
<dbReference type="GO" id="GO:0006508">
    <property type="term" value="P:proteolysis"/>
    <property type="evidence" value="ECO:0007669"/>
    <property type="project" value="UniProtKB-KW"/>
</dbReference>
<name>MBSP_SAUUN</name>
<protein>
    <recommendedName>
        <fullName>Myofibril-bound serine protease</fullName>
        <shortName>MBSP</shortName>
        <ecNumber>3.4.21.-</ecNumber>
    </recommendedName>
</protein>
<feature type="chain" id="PRO_0000088721" description="Myofibril-bound serine protease">
    <location>
        <begin position="1"/>
        <end position="22" status="greater than"/>
    </location>
</feature>
<feature type="domain" description="Peptidase S1" evidence="1">
    <location>
        <begin position="1"/>
        <end position="22" status="greater than"/>
    </location>
</feature>
<feature type="non-terminal residue" evidence="3">
    <location>
        <position position="22"/>
    </location>
</feature>
<comment type="function">
    <text evidence="2">Serine protease which degrades the myosin heavy chain and tropomyosin, but not actin. Selectively cleaves Arg-|-Xaa bonds.</text>
</comment>
<comment type="biophysicochemical properties">
    <phDependence>
        <text evidence="2">Optimum pH is 9.0. Active from pH 5.0 to 11.0.</text>
    </phDependence>
    <temperatureDependence>
        <text evidence="2">Optimum temperature is 35 degrees Celsius. Active from 20 to 70 degrees Celsius.</text>
    </temperatureDependence>
</comment>
<comment type="subcellular location">
    <subcellularLocation>
        <location evidence="2">Cytoplasm</location>
    </subcellularLocation>
</comment>
<comment type="tissue specificity">
    <text evidence="2">Detected in skeletal muscle (at protein level).</text>
</comment>
<comment type="similarity">
    <text evidence="1">Belongs to the peptidase S1 family.</text>
</comment>
<organism>
    <name type="scientific">Saurida undosquamis</name>
    <name type="common">Brushtooth lizardfish</name>
    <name type="synonym">Saurus undosquamis</name>
    <dbReference type="NCBI Taxonomy" id="143315"/>
    <lineage>
        <taxon>Eukaryota</taxon>
        <taxon>Metazoa</taxon>
        <taxon>Chordata</taxon>
        <taxon>Craniata</taxon>
        <taxon>Vertebrata</taxon>
        <taxon>Euteleostomi</taxon>
        <taxon>Actinopterygii</taxon>
        <taxon>Neopterygii</taxon>
        <taxon>Teleostei</taxon>
        <taxon>Neoteleostei</taxon>
        <taxon>Aulopa</taxon>
        <taxon>Aulopiformes</taxon>
        <taxon>Aulopoidei</taxon>
        <taxon>Synodontidae</taxon>
        <taxon>Harpadontinae</taxon>
        <taxon>Saurida</taxon>
    </lineage>
</organism>
<reference evidence="4" key="1">
    <citation type="journal article" date="2004" name="Comp. Biochem. Physiol.">
        <title>Purification and characterization of myofibril-bound serine protease from lizard fish (Saurida undosquamis) muscle.</title>
        <authorList>
            <person name="Ohkubo M."/>
            <person name="Miyagawa K."/>
            <person name="Osatomi K."/>
            <person name="Hara K."/>
            <person name="Nozaki Y."/>
            <person name="Ishihara T."/>
        </authorList>
    </citation>
    <scope>PROTEIN SEQUENCE</scope>
    <scope>FUNCTION</scope>
    <scope>CATALYTIC ACTIVITY</scope>
    <scope>BIOPHYSICOCHEMICAL PROPERTIES</scope>
    <scope>SUBCELLULAR LOCATION</scope>
    <scope>TISSUE SPECIFICITY</scope>
    <source>
        <tissue evidence="2">Skeletal muscle</tissue>
    </source>
</reference>
<proteinExistence type="evidence at protein level"/>
<accession>P84478</accession>
<keyword id="KW-0963">Cytoplasm</keyword>
<keyword id="KW-0903">Direct protein sequencing</keyword>
<keyword id="KW-0378">Hydrolase</keyword>
<keyword id="KW-0645">Protease</keyword>
<keyword id="KW-0720">Serine protease</keyword>
<sequence length="22" mass="2454">IVGGYECEAYSKPYQVSINLGY</sequence>
<evidence type="ECO:0000255" key="1">
    <source>
        <dbReference type="PROSITE-ProRule" id="PRU00274"/>
    </source>
</evidence>
<evidence type="ECO:0000269" key="2">
    <source>
    </source>
</evidence>
<evidence type="ECO:0000303" key="3">
    <source>
    </source>
</evidence>
<evidence type="ECO:0000305" key="4"/>